<keyword id="KW-0066">ATP synthesis</keyword>
<keyword id="KW-0997">Cell inner membrane</keyword>
<keyword id="KW-1003">Cell membrane</keyword>
<keyword id="KW-0139">CF(1)</keyword>
<keyword id="KW-0375">Hydrogen ion transport</keyword>
<keyword id="KW-0406">Ion transport</keyword>
<keyword id="KW-0472">Membrane</keyword>
<keyword id="KW-1185">Reference proteome</keyword>
<keyword id="KW-0813">Transport</keyword>
<sequence length="142" mass="15499">MATFNLTVVSAEEKIFEGAVKSIQATGSEGELGILAGHIPLLTGIKPGIVKITREDNSEEVLYVSGGFLEVQPNIVTVLADVAIRGIELDQERILNAKRKAEDNIVAKHADVDHNLLVAKLSKELAKLRAYELTEKLVKNKR</sequence>
<dbReference type="EMBL" id="CP000746">
    <property type="protein sequence ID" value="ABR73703.1"/>
    <property type="molecule type" value="Genomic_DNA"/>
</dbReference>
<dbReference type="RefSeq" id="WP_011978978.1">
    <property type="nucleotide sequence ID" value="NC_009655.1"/>
</dbReference>
<dbReference type="SMR" id="A6VL56"/>
<dbReference type="STRING" id="339671.Asuc_0325"/>
<dbReference type="KEGG" id="asu:Asuc_0325"/>
<dbReference type="eggNOG" id="COG0355">
    <property type="taxonomic scope" value="Bacteria"/>
</dbReference>
<dbReference type="HOGENOM" id="CLU_084338_2_0_6"/>
<dbReference type="OrthoDB" id="9791445at2"/>
<dbReference type="Proteomes" id="UP000001114">
    <property type="component" value="Chromosome"/>
</dbReference>
<dbReference type="GO" id="GO:0005886">
    <property type="term" value="C:plasma membrane"/>
    <property type="evidence" value="ECO:0007669"/>
    <property type="project" value="UniProtKB-SubCell"/>
</dbReference>
<dbReference type="GO" id="GO:0045259">
    <property type="term" value="C:proton-transporting ATP synthase complex"/>
    <property type="evidence" value="ECO:0007669"/>
    <property type="project" value="UniProtKB-KW"/>
</dbReference>
<dbReference type="GO" id="GO:0005524">
    <property type="term" value="F:ATP binding"/>
    <property type="evidence" value="ECO:0007669"/>
    <property type="project" value="UniProtKB-UniRule"/>
</dbReference>
<dbReference type="GO" id="GO:0046933">
    <property type="term" value="F:proton-transporting ATP synthase activity, rotational mechanism"/>
    <property type="evidence" value="ECO:0007669"/>
    <property type="project" value="UniProtKB-UniRule"/>
</dbReference>
<dbReference type="CDD" id="cd12152">
    <property type="entry name" value="F1-ATPase_delta"/>
    <property type="match status" value="1"/>
</dbReference>
<dbReference type="FunFam" id="2.60.15.10:FF:000001">
    <property type="entry name" value="ATP synthase epsilon chain"/>
    <property type="match status" value="1"/>
</dbReference>
<dbReference type="Gene3D" id="1.20.5.440">
    <property type="entry name" value="ATP synthase delta/epsilon subunit, C-terminal domain"/>
    <property type="match status" value="1"/>
</dbReference>
<dbReference type="Gene3D" id="2.60.15.10">
    <property type="entry name" value="F0F1 ATP synthase delta/epsilon subunit, N-terminal"/>
    <property type="match status" value="1"/>
</dbReference>
<dbReference type="HAMAP" id="MF_00530">
    <property type="entry name" value="ATP_synth_epsil_bac"/>
    <property type="match status" value="1"/>
</dbReference>
<dbReference type="InterPro" id="IPR036794">
    <property type="entry name" value="ATP_F1_dsu/esu_C_sf"/>
</dbReference>
<dbReference type="InterPro" id="IPR001469">
    <property type="entry name" value="ATP_synth_F1_dsu/esu"/>
</dbReference>
<dbReference type="InterPro" id="IPR020546">
    <property type="entry name" value="ATP_synth_F1_dsu/esu_N"/>
</dbReference>
<dbReference type="InterPro" id="IPR036771">
    <property type="entry name" value="ATPsynth_dsu/esu_N"/>
</dbReference>
<dbReference type="NCBIfam" id="TIGR01216">
    <property type="entry name" value="ATP_synt_epsi"/>
    <property type="match status" value="1"/>
</dbReference>
<dbReference type="NCBIfam" id="NF001847">
    <property type="entry name" value="PRK00571.1-4"/>
    <property type="match status" value="1"/>
</dbReference>
<dbReference type="PANTHER" id="PTHR13822">
    <property type="entry name" value="ATP SYNTHASE DELTA/EPSILON CHAIN"/>
    <property type="match status" value="1"/>
</dbReference>
<dbReference type="PANTHER" id="PTHR13822:SF10">
    <property type="entry name" value="ATP SYNTHASE EPSILON CHAIN, CHLOROPLASTIC"/>
    <property type="match status" value="1"/>
</dbReference>
<dbReference type="Pfam" id="PF02823">
    <property type="entry name" value="ATP-synt_DE_N"/>
    <property type="match status" value="1"/>
</dbReference>
<dbReference type="SUPFAM" id="SSF46604">
    <property type="entry name" value="Epsilon subunit of F1F0-ATP synthase C-terminal domain"/>
    <property type="match status" value="1"/>
</dbReference>
<dbReference type="SUPFAM" id="SSF51344">
    <property type="entry name" value="Epsilon subunit of F1F0-ATP synthase N-terminal domain"/>
    <property type="match status" value="1"/>
</dbReference>
<protein>
    <recommendedName>
        <fullName evidence="1">ATP synthase epsilon chain</fullName>
    </recommendedName>
    <alternativeName>
        <fullName evidence="1">ATP synthase F1 sector epsilon subunit</fullName>
    </alternativeName>
    <alternativeName>
        <fullName evidence="1">F-ATPase epsilon subunit</fullName>
    </alternativeName>
</protein>
<proteinExistence type="inferred from homology"/>
<comment type="function">
    <text evidence="1">Produces ATP from ADP in the presence of a proton gradient across the membrane.</text>
</comment>
<comment type="subunit">
    <text evidence="1">F-type ATPases have 2 components, CF(1) - the catalytic core - and CF(0) - the membrane proton channel. CF(1) has five subunits: alpha(3), beta(3), gamma(1), delta(1), epsilon(1). CF(0) has three main subunits: a, b and c.</text>
</comment>
<comment type="subcellular location">
    <subcellularLocation>
        <location evidence="1">Cell inner membrane</location>
        <topology evidence="1">Peripheral membrane protein</topology>
    </subcellularLocation>
</comment>
<comment type="similarity">
    <text evidence="1">Belongs to the ATPase epsilon chain family.</text>
</comment>
<accession>A6VL56</accession>
<evidence type="ECO:0000255" key="1">
    <source>
        <dbReference type="HAMAP-Rule" id="MF_00530"/>
    </source>
</evidence>
<name>ATPE_ACTSZ</name>
<gene>
    <name evidence="1" type="primary">atpC</name>
    <name type="ordered locus">Asuc_0325</name>
</gene>
<organism>
    <name type="scientific">Actinobacillus succinogenes (strain ATCC 55618 / DSM 22257 / CCUG 43843 / 130Z)</name>
    <dbReference type="NCBI Taxonomy" id="339671"/>
    <lineage>
        <taxon>Bacteria</taxon>
        <taxon>Pseudomonadati</taxon>
        <taxon>Pseudomonadota</taxon>
        <taxon>Gammaproteobacteria</taxon>
        <taxon>Pasteurellales</taxon>
        <taxon>Pasteurellaceae</taxon>
        <taxon>Actinobacillus</taxon>
    </lineage>
</organism>
<reference key="1">
    <citation type="journal article" date="2010" name="BMC Genomics">
        <title>A genomic perspective on the potential of Actinobacillus succinogenes for industrial succinate production.</title>
        <authorList>
            <person name="McKinlay J.B."/>
            <person name="Laivenieks M."/>
            <person name="Schindler B.D."/>
            <person name="McKinlay A.A."/>
            <person name="Siddaramappa S."/>
            <person name="Challacombe J.F."/>
            <person name="Lowry S.R."/>
            <person name="Clum A."/>
            <person name="Lapidus A.L."/>
            <person name="Burkhart K.B."/>
            <person name="Harkins V."/>
            <person name="Vieille C."/>
        </authorList>
    </citation>
    <scope>NUCLEOTIDE SEQUENCE [LARGE SCALE GENOMIC DNA]</scope>
    <source>
        <strain>ATCC 55618 / DSM 22257 / CCUG 43843 / 130Z</strain>
    </source>
</reference>
<feature type="chain" id="PRO_1000072498" description="ATP synthase epsilon chain">
    <location>
        <begin position="1"/>
        <end position="142"/>
    </location>
</feature>